<dbReference type="EMBL" id="CP000435">
    <property type="protein sequence ID" value="ABI45767.1"/>
    <property type="molecule type" value="Genomic_DNA"/>
</dbReference>
<dbReference type="RefSeq" id="WP_011618499.1">
    <property type="nucleotide sequence ID" value="NC_008319.1"/>
</dbReference>
<dbReference type="SMR" id="Q0ICQ3"/>
<dbReference type="STRING" id="64471.sync_0544"/>
<dbReference type="KEGG" id="syg:sync_0544"/>
<dbReference type="eggNOG" id="COG0851">
    <property type="taxonomic scope" value="Bacteria"/>
</dbReference>
<dbReference type="HOGENOM" id="CLU_137929_1_1_3"/>
<dbReference type="OrthoDB" id="9796578at2"/>
<dbReference type="Proteomes" id="UP000001961">
    <property type="component" value="Chromosome"/>
</dbReference>
<dbReference type="GO" id="GO:0051301">
    <property type="term" value="P:cell division"/>
    <property type="evidence" value="ECO:0007669"/>
    <property type="project" value="UniProtKB-KW"/>
</dbReference>
<dbReference type="GO" id="GO:0032955">
    <property type="term" value="P:regulation of division septum assembly"/>
    <property type="evidence" value="ECO:0007669"/>
    <property type="project" value="InterPro"/>
</dbReference>
<dbReference type="Gene3D" id="3.30.1070.10">
    <property type="entry name" value="Cell division topological specificity factor MinE"/>
    <property type="match status" value="1"/>
</dbReference>
<dbReference type="HAMAP" id="MF_00262">
    <property type="entry name" value="MinE"/>
    <property type="match status" value="1"/>
</dbReference>
<dbReference type="InterPro" id="IPR005527">
    <property type="entry name" value="MinE"/>
</dbReference>
<dbReference type="InterPro" id="IPR036707">
    <property type="entry name" value="MinE_sf"/>
</dbReference>
<dbReference type="NCBIfam" id="TIGR01215">
    <property type="entry name" value="minE"/>
    <property type="match status" value="1"/>
</dbReference>
<dbReference type="NCBIfam" id="NF001422">
    <property type="entry name" value="PRK00296.1"/>
    <property type="match status" value="1"/>
</dbReference>
<dbReference type="Pfam" id="PF03776">
    <property type="entry name" value="MinE"/>
    <property type="match status" value="1"/>
</dbReference>
<dbReference type="SUPFAM" id="SSF55229">
    <property type="entry name" value="Cell division protein MinE topological specificity domain"/>
    <property type="match status" value="1"/>
</dbReference>
<proteinExistence type="inferred from homology"/>
<sequence>MTLRDLVDKLLGRQPASASTARDRLQLVLAHDRSDLSPELLDQMRREIFEVVAKYVDIDLEEGDVSLETEDRVTALVANLPFRRPITSAPPKSD</sequence>
<keyword id="KW-0131">Cell cycle</keyword>
<keyword id="KW-0132">Cell division</keyword>
<keyword id="KW-1185">Reference proteome</keyword>
<feature type="chain" id="PRO_0000298197" description="Cell division topological specificity factor">
    <location>
        <begin position="1"/>
        <end position="94"/>
    </location>
</feature>
<reference key="1">
    <citation type="journal article" date="2006" name="Proc. Natl. Acad. Sci. U.S.A.">
        <title>Genome sequence of Synechococcus CC9311: insights into adaptation to a coastal environment.</title>
        <authorList>
            <person name="Palenik B."/>
            <person name="Ren Q."/>
            <person name="Dupont C.L."/>
            <person name="Myers G.S."/>
            <person name="Heidelberg J.F."/>
            <person name="Badger J.H."/>
            <person name="Madupu R."/>
            <person name="Nelson W.C."/>
            <person name="Brinkac L.M."/>
            <person name="Dodson R.J."/>
            <person name="Durkin A.S."/>
            <person name="Daugherty S.C."/>
            <person name="Sullivan S.A."/>
            <person name="Khouri H."/>
            <person name="Mohamoud Y."/>
            <person name="Halpin R."/>
            <person name="Paulsen I.T."/>
        </authorList>
    </citation>
    <scope>NUCLEOTIDE SEQUENCE [LARGE SCALE GENOMIC DNA]</scope>
    <source>
        <strain>CC9311</strain>
    </source>
</reference>
<organism>
    <name type="scientific">Synechococcus sp. (strain CC9311)</name>
    <dbReference type="NCBI Taxonomy" id="64471"/>
    <lineage>
        <taxon>Bacteria</taxon>
        <taxon>Bacillati</taxon>
        <taxon>Cyanobacteriota</taxon>
        <taxon>Cyanophyceae</taxon>
        <taxon>Synechococcales</taxon>
        <taxon>Synechococcaceae</taxon>
        <taxon>Synechococcus</taxon>
    </lineage>
</organism>
<comment type="function">
    <text evidence="1">Prevents the cell division inhibition by proteins MinC and MinD at internal division sites while permitting inhibition at polar sites. This ensures cell division at the proper site by restricting the formation of a division septum at the midpoint of the long axis of the cell.</text>
</comment>
<comment type="similarity">
    <text evidence="1">Belongs to the MinE family.</text>
</comment>
<gene>
    <name evidence="1" type="primary">minE</name>
    <name type="ordered locus">sync_0544</name>
</gene>
<accession>Q0ICQ3</accession>
<protein>
    <recommendedName>
        <fullName evidence="1">Cell division topological specificity factor</fullName>
    </recommendedName>
</protein>
<evidence type="ECO:0000255" key="1">
    <source>
        <dbReference type="HAMAP-Rule" id="MF_00262"/>
    </source>
</evidence>
<name>MINE_SYNS3</name>